<gene>
    <name evidence="1" type="primary">gpsA</name>
    <name type="ordered locus">Synpcc7942_2522</name>
    <name type="ORF">sea0004</name>
</gene>
<proteinExistence type="inferred from homology"/>
<evidence type="ECO:0000255" key="1">
    <source>
        <dbReference type="HAMAP-Rule" id="MF_00394"/>
    </source>
</evidence>
<evidence type="ECO:0000305" key="2"/>
<reference key="1">
    <citation type="submission" date="2002-11" db="EMBL/GenBank/DDBJ databases">
        <title>Synechococcus elongatus PCC7942 genome sequence, cosmid 7H1.</title>
        <authorList>
            <person name="Holtman C.K."/>
            <person name="Socias T."/>
            <person name="Mohler B.J."/>
            <person name="Chen Y."/>
            <person name="Min H."/>
            <person name="Golden S.S."/>
            <person name="Youderian P."/>
        </authorList>
    </citation>
    <scope>NUCLEOTIDE SEQUENCE [GENOMIC DNA]</scope>
</reference>
<reference key="2">
    <citation type="submission" date="2005-08" db="EMBL/GenBank/DDBJ databases">
        <title>Complete sequence of chromosome 1 of Synechococcus elongatus PCC 7942.</title>
        <authorList>
            <consortium name="US DOE Joint Genome Institute"/>
            <person name="Copeland A."/>
            <person name="Lucas S."/>
            <person name="Lapidus A."/>
            <person name="Barry K."/>
            <person name="Detter J.C."/>
            <person name="Glavina T."/>
            <person name="Hammon N."/>
            <person name="Israni S."/>
            <person name="Pitluck S."/>
            <person name="Schmutz J."/>
            <person name="Larimer F."/>
            <person name="Land M."/>
            <person name="Kyrpides N."/>
            <person name="Lykidis A."/>
            <person name="Golden S."/>
            <person name="Richardson P."/>
        </authorList>
    </citation>
    <scope>NUCLEOTIDE SEQUENCE [LARGE SCALE GENOMIC DNA]</scope>
    <source>
        <strain>ATCC 33912 / PCC 7942 / FACHB-805</strain>
    </source>
</reference>
<accession>Q935Z2</accession>
<accession>Q31K67</accession>
<organism>
    <name type="scientific">Synechococcus elongatus (strain ATCC 33912 / PCC 7942 / FACHB-805)</name>
    <name type="common">Anacystis nidulans R2</name>
    <dbReference type="NCBI Taxonomy" id="1140"/>
    <lineage>
        <taxon>Bacteria</taxon>
        <taxon>Bacillati</taxon>
        <taxon>Cyanobacteriota</taxon>
        <taxon>Cyanophyceae</taxon>
        <taxon>Synechococcales</taxon>
        <taxon>Synechococcaceae</taxon>
        <taxon>Synechococcus</taxon>
    </lineage>
</organism>
<feature type="chain" id="PRO_0000138046" description="Glycerol-3-phosphate dehydrogenase [NAD(P)+]">
    <location>
        <begin position="1"/>
        <end position="308"/>
    </location>
</feature>
<feature type="active site" description="Proton acceptor" evidence="1">
    <location>
        <position position="166"/>
    </location>
</feature>
<feature type="binding site" evidence="1">
    <location>
        <position position="15"/>
    </location>
    <ligand>
        <name>NADPH</name>
        <dbReference type="ChEBI" id="CHEBI:57783"/>
    </ligand>
</feature>
<feature type="binding site" evidence="1">
    <location>
        <position position="35"/>
    </location>
    <ligand>
        <name>NADPH</name>
        <dbReference type="ChEBI" id="CHEBI:57783"/>
    </ligand>
</feature>
<feature type="binding site" evidence="1">
    <location>
        <position position="36"/>
    </location>
    <ligand>
        <name>NADPH</name>
        <dbReference type="ChEBI" id="CHEBI:57783"/>
    </ligand>
</feature>
<feature type="binding site" evidence="1">
    <location>
        <position position="83"/>
    </location>
    <ligand>
        <name>NADPH</name>
        <dbReference type="ChEBI" id="CHEBI:57783"/>
    </ligand>
</feature>
<feature type="binding site" evidence="1">
    <location>
        <position position="83"/>
    </location>
    <ligand>
        <name>sn-glycerol 3-phosphate</name>
        <dbReference type="ChEBI" id="CHEBI:57597"/>
    </ligand>
</feature>
<feature type="binding site" evidence="1">
    <location>
        <position position="111"/>
    </location>
    <ligand>
        <name>sn-glycerol 3-phosphate</name>
        <dbReference type="ChEBI" id="CHEBI:57597"/>
    </ligand>
</feature>
<feature type="binding site" evidence="1">
    <location>
        <position position="115"/>
    </location>
    <ligand>
        <name>NADPH</name>
        <dbReference type="ChEBI" id="CHEBI:57783"/>
    </ligand>
</feature>
<feature type="binding site" evidence="1">
    <location>
        <position position="166"/>
    </location>
    <ligand>
        <name>sn-glycerol 3-phosphate</name>
        <dbReference type="ChEBI" id="CHEBI:57597"/>
    </ligand>
</feature>
<feature type="binding site" evidence="1">
    <location>
        <position position="219"/>
    </location>
    <ligand>
        <name>sn-glycerol 3-phosphate</name>
        <dbReference type="ChEBI" id="CHEBI:57597"/>
    </ligand>
</feature>
<feature type="binding site" evidence="1">
    <location>
        <position position="229"/>
    </location>
    <ligand>
        <name>sn-glycerol 3-phosphate</name>
        <dbReference type="ChEBI" id="CHEBI:57597"/>
    </ligand>
</feature>
<feature type="binding site" evidence="1">
    <location>
        <position position="230"/>
    </location>
    <ligand>
        <name>NADPH</name>
        <dbReference type="ChEBI" id="CHEBI:57783"/>
    </ligand>
</feature>
<feature type="binding site" evidence="1">
    <location>
        <position position="230"/>
    </location>
    <ligand>
        <name>sn-glycerol 3-phosphate</name>
        <dbReference type="ChEBI" id="CHEBI:57597"/>
    </ligand>
</feature>
<feature type="binding site" evidence="1">
    <location>
        <position position="231"/>
    </location>
    <ligand>
        <name>sn-glycerol 3-phosphate</name>
        <dbReference type="ChEBI" id="CHEBI:57597"/>
    </ligand>
</feature>
<feature type="binding site" evidence="1">
    <location>
        <position position="256"/>
    </location>
    <ligand>
        <name>NADPH</name>
        <dbReference type="ChEBI" id="CHEBI:57783"/>
    </ligand>
</feature>
<feature type="sequence conflict" description="In Ref. 1; AAL03916." evidence="2" ref="1">
    <original>Q</original>
    <variation>H</variation>
    <location>
        <position position="240"/>
    </location>
</feature>
<feature type="sequence conflict" description="In Ref. 1; AAL03916." evidence="2" ref="1">
    <original>A</original>
    <variation>T</variation>
    <location>
        <position position="247"/>
    </location>
</feature>
<comment type="function">
    <text evidence="1">Catalyzes the reduction of the glycolytic intermediate dihydroxyacetone phosphate (DHAP) to sn-glycerol 3-phosphate (G3P), the key precursor for phospholipid synthesis.</text>
</comment>
<comment type="catalytic activity">
    <reaction evidence="1">
        <text>sn-glycerol 3-phosphate + NAD(+) = dihydroxyacetone phosphate + NADH + H(+)</text>
        <dbReference type="Rhea" id="RHEA:11092"/>
        <dbReference type="ChEBI" id="CHEBI:15378"/>
        <dbReference type="ChEBI" id="CHEBI:57540"/>
        <dbReference type="ChEBI" id="CHEBI:57597"/>
        <dbReference type="ChEBI" id="CHEBI:57642"/>
        <dbReference type="ChEBI" id="CHEBI:57945"/>
        <dbReference type="EC" id="1.1.1.94"/>
    </reaction>
    <physiologicalReaction direction="right-to-left" evidence="1">
        <dbReference type="Rhea" id="RHEA:11094"/>
    </physiologicalReaction>
</comment>
<comment type="catalytic activity">
    <reaction evidence="1">
        <text>sn-glycerol 3-phosphate + NADP(+) = dihydroxyacetone phosphate + NADPH + H(+)</text>
        <dbReference type="Rhea" id="RHEA:11096"/>
        <dbReference type="ChEBI" id="CHEBI:15378"/>
        <dbReference type="ChEBI" id="CHEBI:57597"/>
        <dbReference type="ChEBI" id="CHEBI:57642"/>
        <dbReference type="ChEBI" id="CHEBI:57783"/>
        <dbReference type="ChEBI" id="CHEBI:58349"/>
        <dbReference type="EC" id="1.1.1.94"/>
    </reaction>
    <physiologicalReaction direction="right-to-left" evidence="1">
        <dbReference type="Rhea" id="RHEA:11098"/>
    </physiologicalReaction>
</comment>
<comment type="pathway">
    <text evidence="1">Membrane lipid metabolism; glycerophospholipid metabolism.</text>
</comment>
<comment type="subcellular location">
    <subcellularLocation>
        <location evidence="1">Cytoplasm</location>
    </subcellularLocation>
</comment>
<comment type="similarity">
    <text evidence="1">Belongs to the NAD-dependent glycerol-3-phosphate dehydrogenase family.</text>
</comment>
<keyword id="KW-0963">Cytoplasm</keyword>
<keyword id="KW-0444">Lipid biosynthesis</keyword>
<keyword id="KW-0443">Lipid metabolism</keyword>
<keyword id="KW-0520">NAD</keyword>
<keyword id="KW-0521">NADP</keyword>
<keyword id="KW-0547">Nucleotide-binding</keyword>
<keyword id="KW-0560">Oxidoreductase</keyword>
<keyword id="KW-0594">Phospholipid biosynthesis</keyword>
<keyword id="KW-1208">Phospholipid metabolism</keyword>
<keyword id="KW-1185">Reference proteome</keyword>
<protein>
    <recommendedName>
        <fullName evidence="1">Glycerol-3-phosphate dehydrogenase [NAD(P)+]</fullName>
        <ecNumber evidence="1">1.1.1.94</ecNumber>
    </recommendedName>
    <alternativeName>
        <fullName evidence="1">NAD(P)(+)-dependent glycerol-3-phosphate dehydrogenase</fullName>
    </alternativeName>
    <alternativeName>
        <fullName evidence="1">NAD(P)H-dependent dihydroxyacetone-phosphate reductase</fullName>
    </alternativeName>
</protein>
<name>GPDA_SYNE7</name>
<sequence length="308" mass="32224">MQEAKVAAILGAGAWGTTLAQLLRSNGLEVRQWSRRSETSLAATLAEADLWIMAVSMAGLASVADQVAALQLGDRAIWVSATKGLADLGWRTPSQVLSDRFPLQPITVLSGPNLSKEISQGLPAATVIASRDRHAAAVVQQAFASDRFRVYTNRDPLGTELGGALKNVIAIAVGVCDGLCLGANARSALVTRALAEILRVGAYFGARTETFFGLSGLGDLLATCTSPLSRNYQVGFRLAQGESLAAALTAIAATAEGVSTARVLAQLASREGLELPIAACVAELLDNRISPTTAIERLMARDLKAELV</sequence>
<dbReference type="EC" id="1.1.1.94" evidence="1"/>
<dbReference type="EMBL" id="U30252">
    <property type="protein sequence ID" value="AAL03916.2"/>
    <property type="molecule type" value="Genomic_DNA"/>
</dbReference>
<dbReference type="EMBL" id="CP000100">
    <property type="protein sequence ID" value="ABB58552.1"/>
    <property type="molecule type" value="Genomic_DNA"/>
</dbReference>
<dbReference type="RefSeq" id="WP_011378502.1">
    <property type="nucleotide sequence ID" value="NZ_JACJTX010000001.1"/>
</dbReference>
<dbReference type="SMR" id="Q935Z2"/>
<dbReference type="STRING" id="1140.Synpcc7942_2522"/>
<dbReference type="PaxDb" id="1140-Synpcc7942_2522"/>
<dbReference type="KEGG" id="syf:Synpcc7942_2522"/>
<dbReference type="eggNOG" id="COG0240">
    <property type="taxonomic scope" value="Bacteria"/>
</dbReference>
<dbReference type="HOGENOM" id="CLU_033449_0_2_3"/>
<dbReference type="OrthoDB" id="9812273at2"/>
<dbReference type="BioCyc" id="SYNEL:SYNPCC7942_2522-MONOMER"/>
<dbReference type="UniPathway" id="UPA00940"/>
<dbReference type="Proteomes" id="UP000889800">
    <property type="component" value="Chromosome"/>
</dbReference>
<dbReference type="GO" id="GO:0005829">
    <property type="term" value="C:cytosol"/>
    <property type="evidence" value="ECO:0007669"/>
    <property type="project" value="TreeGrafter"/>
</dbReference>
<dbReference type="GO" id="GO:0047952">
    <property type="term" value="F:glycerol-3-phosphate dehydrogenase [NAD(P)+] activity"/>
    <property type="evidence" value="ECO:0007669"/>
    <property type="project" value="UniProtKB-UniRule"/>
</dbReference>
<dbReference type="GO" id="GO:0051287">
    <property type="term" value="F:NAD binding"/>
    <property type="evidence" value="ECO:0007669"/>
    <property type="project" value="InterPro"/>
</dbReference>
<dbReference type="GO" id="GO:0005975">
    <property type="term" value="P:carbohydrate metabolic process"/>
    <property type="evidence" value="ECO:0007669"/>
    <property type="project" value="InterPro"/>
</dbReference>
<dbReference type="GO" id="GO:0046167">
    <property type="term" value="P:glycerol-3-phosphate biosynthetic process"/>
    <property type="evidence" value="ECO:0007669"/>
    <property type="project" value="UniProtKB-UniRule"/>
</dbReference>
<dbReference type="GO" id="GO:0046168">
    <property type="term" value="P:glycerol-3-phosphate catabolic process"/>
    <property type="evidence" value="ECO:0007669"/>
    <property type="project" value="InterPro"/>
</dbReference>
<dbReference type="GO" id="GO:0006650">
    <property type="term" value="P:glycerophospholipid metabolic process"/>
    <property type="evidence" value="ECO:0007669"/>
    <property type="project" value="UniProtKB-UniRule"/>
</dbReference>
<dbReference type="GO" id="GO:0008654">
    <property type="term" value="P:phospholipid biosynthetic process"/>
    <property type="evidence" value="ECO:0007669"/>
    <property type="project" value="UniProtKB-KW"/>
</dbReference>
<dbReference type="FunFam" id="1.10.1040.10:FF:000001">
    <property type="entry name" value="Glycerol-3-phosphate dehydrogenase [NAD(P)+]"/>
    <property type="match status" value="1"/>
</dbReference>
<dbReference type="FunFam" id="3.40.50.720:FF:001174">
    <property type="entry name" value="Glycerol-3-phosphate dehydrogenase [NAD(P)+]"/>
    <property type="match status" value="1"/>
</dbReference>
<dbReference type="Gene3D" id="1.10.1040.10">
    <property type="entry name" value="N-(1-d-carboxylethyl)-l-norvaline Dehydrogenase, domain 2"/>
    <property type="match status" value="1"/>
</dbReference>
<dbReference type="Gene3D" id="3.40.50.720">
    <property type="entry name" value="NAD(P)-binding Rossmann-like Domain"/>
    <property type="match status" value="2"/>
</dbReference>
<dbReference type="HAMAP" id="MF_00394">
    <property type="entry name" value="NAD_Glyc3P_dehydrog"/>
    <property type="match status" value="1"/>
</dbReference>
<dbReference type="InterPro" id="IPR008927">
    <property type="entry name" value="6-PGluconate_DH-like_C_sf"/>
</dbReference>
<dbReference type="InterPro" id="IPR013328">
    <property type="entry name" value="6PGD_dom2"/>
</dbReference>
<dbReference type="InterPro" id="IPR006168">
    <property type="entry name" value="G3P_DH_NAD-dep"/>
</dbReference>
<dbReference type="InterPro" id="IPR006109">
    <property type="entry name" value="G3P_DH_NAD-dep_C"/>
</dbReference>
<dbReference type="InterPro" id="IPR011128">
    <property type="entry name" value="G3P_DH_NAD-dep_N"/>
</dbReference>
<dbReference type="InterPro" id="IPR036291">
    <property type="entry name" value="NAD(P)-bd_dom_sf"/>
</dbReference>
<dbReference type="NCBIfam" id="NF000940">
    <property type="entry name" value="PRK00094.1-2"/>
    <property type="match status" value="1"/>
</dbReference>
<dbReference type="NCBIfam" id="NF000942">
    <property type="entry name" value="PRK00094.1-4"/>
    <property type="match status" value="1"/>
</dbReference>
<dbReference type="NCBIfam" id="NF011212">
    <property type="entry name" value="PRK14619.1"/>
    <property type="match status" value="1"/>
</dbReference>
<dbReference type="PANTHER" id="PTHR11728">
    <property type="entry name" value="GLYCEROL-3-PHOSPHATE DEHYDROGENASE"/>
    <property type="match status" value="1"/>
</dbReference>
<dbReference type="PANTHER" id="PTHR11728:SF1">
    <property type="entry name" value="GLYCEROL-3-PHOSPHATE DEHYDROGENASE [NAD(+)] 2, CHLOROPLASTIC"/>
    <property type="match status" value="1"/>
</dbReference>
<dbReference type="Pfam" id="PF07479">
    <property type="entry name" value="NAD_Gly3P_dh_C"/>
    <property type="match status" value="1"/>
</dbReference>
<dbReference type="Pfam" id="PF01210">
    <property type="entry name" value="NAD_Gly3P_dh_N"/>
    <property type="match status" value="1"/>
</dbReference>
<dbReference type="PIRSF" id="PIRSF000114">
    <property type="entry name" value="Glycerol-3-P_dh"/>
    <property type="match status" value="1"/>
</dbReference>
<dbReference type="SUPFAM" id="SSF48179">
    <property type="entry name" value="6-phosphogluconate dehydrogenase C-terminal domain-like"/>
    <property type="match status" value="1"/>
</dbReference>
<dbReference type="SUPFAM" id="SSF51735">
    <property type="entry name" value="NAD(P)-binding Rossmann-fold domains"/>
    <property type="match status" value="1"/>
</dbReference>
<dbReference type="PROSITE" id="PS00957">
    <property type="entry name" value="NAD_G3PDH"/>
    <property type="match status" value="1"/>
</dbReference>